<comment type="function">
    <text evidence="1">Responsible for the release of ribosomes from messenger RNA at the termination of protein biosynthesis. May increase the efficiency of translation by recycling ribosomes from one round of translation to another.</text>
</comment>
<comment type="subcellular location">
    <subcellularLocation>
        <location evidence="1">Cytoplasm</location>
    </subcellularLocation>
</comment>
<comment type="similarity">
    <text evidence="1">Belongs to the RRF family.</text>
</comment>
<comment type="sequence caution" evidence="2">
    <conflict type="erroneous initiation">
        <sequence resource="EMBL-CDS" id="ABI61833"/>
    </conflict>
</comment>
<organism>
    <name type="scientific">Granulibacter bethesdensis (strain ATCC BAA-1260 / CGDNIH1)</name>
    <dbReference type="NCBI Taxonomy" id="391165"/>
    <lineage>
        <taxon>Bacteria</taxon>
        <taxon>Pseudomonadati</taxon>
        <taxon>Pseudomonadota</taxon>
        <taxon>Alphaproteobacteria</taxon>
        <taxon>Acetobacterales</taxon>
        <taxon>Acetobacteraceae</taxon>
        <taxon>Granulibacter</taxon>
    </lineage>
</organism>
<accession>Q0BTL9</accession>
<evidence type="ECO:0000255" key="1">
    <source>
        <dbReference type="HAMAP-Rule" id="MF_00040"/>
    </source>
</evidence>
<evidence type="ECO:0000305" key="2"/>
<name>RRF_GRABC</name>
<gene>
    <name evidence="1" type="primary">frr</name>
    <name type="ordered locus">GbCGDNIH1_0935</name>
</gene>
<reference key="1">
    <citation type="journal article" date="2007" name="J. Bacteriol.">
        <title>Genome sequence analysis of the emerging human pathogenic acetic acid bacterium Granulibacter bethesdensis.</title>
        <authorList>
            <person name="Greenberg D.E."/>
            <person name="Porcella S.F."/>
            <person name="Zelazny A.M."/>
            <person name="Virtaneva K."/>
            <person name="Sturdevant D.E."/>
            <person name="Kupko J.J. III"/>
            <person name="Barbian K.D."/>
            <person name="Babar A."/>
            <person name="Dorward D.W."/>
            <person name="Holland S.M."/>
        </authorList>
    </citation>
    <scope>NUCLEOTIDE SEQUENCE [LARGE SCALE GENOMIC DNA]</scope>
    <source>
        <strain>ATCC BAA-1260 / CGDNIH1</strain>
    </source>
</reference>
<proteinExistence type="inferred from homology"/>
<feature type="chain" id="PRO_0000341012" description="Ribosome-recycling factor">
    <location>
        <begin position="1"/>
        <end position="188"/>
    </location>
</feature>
<protein>
    <recommendedName>
        <fullName evidence="1">Ribosome-recycling factor</fullName>
        <shortName evidence="1">RRF</shortName>
    </recommendedName>
    <alternativeName>
        <fullName evidence="1">Ribosome-releasing factor</fullName>
    </alternativeName>
</protein>
<keyword id="KW-0963">Cytoplasm</keyword>
<keyword id="KW-0648">Protein biosynthesis</keyword>
<keyword id="KW-1185">Reference proteome</keyword>
<dbReference type="EMBL" id="CP000394">
    <property type="protein sequence ID" value="ABI61833.1"/>
    <property type="status" value="ALT_INIT"/>
    <property type="molecule type" value="Genomic_DNA"/>
</dbReference>
<dbReference type="RefSeq" id="WP_025286432.1">
    <property type="nucleotide sequence ID" value="NC_008343.2"/>
</dbReference>
<dbReference type="SMR" id="Q0BTL9"/>
<dbReference type="STRING" id="391165.GbCGDNIH1_0935"/>
<dbReference type="GeneID" id="69745196"/>
<dbReference type="KEGG" id="gbe:GbCGDNIH1_0935"/>
<dbReference type="eggNOG" id="COG0233">
    <property type="taxonomic scope" value="Bacteria"/>
</dbReference>
<dbReference type="HOGENOM" id="CLU_073981_2_0_5"/>
<dbReference type="OrthoDB" id="9804006at2"/>
<dbReference type="Proteomes" id="UP000001963">
    <property type="component" value="Chromosome"/>
</dbReference>
<dbReference type="GO" id="GO:0005829">
    <property type="term" value="C:cytosol"/>
    <property type="evidence" value="ECO:0007669"/>
    <property type="project" value="GOC"/>
</dbReference>
<dbReference type="GO" id="GO:0043023">
    <property type="term" value="F:ribosomal large subunit binding"/>
    <property type="evidence" value="ECO:0007669"/>
    <property type="project" value="TreeGrafter"/>
</dbReference>
<dbReference type="GO" id="GO:0002184">
    <property type="term" value="P:cytoplasmic translational termination"/>
    <property type="evidence" value="ECO:0007669"/>
    <property type="project" value="TreeGrafter"/>
</dbReference>
<dbReference type="CDD" id="cd00520">
    <property type="entry name" value="RRF"/>
    <property type="match status" value="1"/>
</dbReference>
<dbReference type="FunFam" id="1.10.132.20:FF:000001">
    <property type="entry name" value="Ribosome-recycling factor"/>
    <property type="match status" value="1"/>
</dbReference>
<dbReference type="FunFam" id="3.30.1360.40:FF:000001">
    <property type="entry name" value="Ribosome-recycling factor"/>
    <property type="match status" value="1"/>
</dbReference>
<dbReference type="Gene3D" id="3.30.1360.40">
    <property type="match status" value="1"/>
</dbReference>
<dbReference type="Gene3D" id="1.10.132.20">
    <property type="entry name" value="Ribosome-recycling factor"/>
    <property type="match status" value="1"/>
</dbReference>
<dbReference type="HAMAP" id="MF_00040">
    <property type="entry name" value="RRF"/>
    <property type="match status" value="1"/>
</dbReference>
<dbReference type="InterPro" id="IPR002661">
    <property type="entry name" value="Ribosome_recyc_fac"/>
</dbReference>
<dbReference type="InterPro" id="IPR023584">
    <property type="entry name" value="Ribosome_recyc_fac_dom"/>
</dbReference>
<dbReference type="InterPro" id="IPR036191">
    <property type="entry name" value="RRF_sf"/>
</dbReference>
<dbReference type="NCBIfam" id="TIGR00496">
    <property type="entry name" value="frr"/>
    <property type="match status" value="1"/>
</dbReference>
<dbReference type="PANTHER" id="PTHR20982:SF3">
    <property type="entry name" value="MITOCHONDRIAL RIBOSOME RECYCLING FACTOR PSEUDO 1"/>
    <property type="match status" value="1"/>
</dbReference>
<dbReference type="PANTHER" id="PTHR20982">
    <property type="entry name" value="RIBOSOME RECYCLING FACTOR"/>
    <property type="match status" value="1"/>
</dbReference>
<dbReference type="Pfam" id="PF01765">
    <property type="entry name" value="RRF"/>
    <property type="match status" value="1"/>
</dbReference>
<dbReference type="SUPFAM" id="SSF55194">
    <property type="entry name" value="Ribosome recycling factor, RRF"/>
    <property type="match status" value="1"/>
</dbReference>
<sequence length="188" mass="21061">MAADLNTLKQDLTRRMDGALETLRREFAGLRAGRASPALLEPVRVDAYGSEVPLTQVGNIGVPESRMLTVQVWDRSLVSAVEKAIRDCGLGLNPQTEGQLIRVPLPMLTEERRNELAKAAGRYAESTRVAIRAVRRDGMDQIKGHEKKSEIGEDEAKTWSDEVQKLTDHYIKRVDDALVEKEKDIRQV</sequence>